<comment type="function">
    <text evidence="1">Located on the platform of the 30S subunit, it bridges several disparate RNA helices of the 16S rRNA. Forms part of the Shine-Dalgarno cleft in the 70S ribosome.</text>
</comment>
<comment type="subunit">
    <text evidence="1">Part of the 30S ribosomal subunit. Interacts with proteins S7 and S18. Binds to IF-3.</text>
</comment>
<comment type="similarity">
    <text evidence="1">Belongs to the universal ribosomal protein uS11 family.</text>
</comment>
<organism>
    <name type="scientific">Helicobacter pylori (strain P12)</name>
    <dbReference type="NCBI Taxonomy" id="570508"/>
    <lineage>
        <taxon>Bacteria</taxon>
        <taxon>Pseudomonadati</taxon>
        <taxon>Campylobacterota</taxon>
        <taxon>Epsilonproteobacteria</taxon>
        <taxon>Campylobacterales</taxon>
        <taxon>Helicobacteraceae</taxon>
        <taxon>Helicobacter</taxon>
    </lineage>
</organism>
<reference key="1">
    <citation type="submission" date="2008-10" db="EMBL/GenBank/DDBJ databases">
        <title>The complete genome sequence of Helicobacter pylori strain P12.</title>
        <authorList>
            <person name="Fischer W."/>
            <person name="Windhager L."/>
            <person name="Karnholz A."/>
            <person name="Zeiller M."/>
            <person name="Zimmer R."/>
            <person name="Haas R."/>
        </authorList>
    </citation>
    <scope>NUCLEOTIDE SEQUENCE [LARGE SCALE GENOMIC DNA]</scope>
    <source>
        <strain>P12</strain>
    </source>
</reference>
<dbReference type="EMBL" id="CP001217">
    <property type="protein sequence ID" value="ACJ08413.1"/>
    <property type="molecule type" value="Genomic_DNA"/>
</dbReference>
<dbReference type="SMR" id="B6JND5"/>
<dbReference type="KEGG" id="hpp:HPP12_1261"/>
<dbReference type="HOGENOM" id="CLU_072439_5_0_7"/>
<dbReference type="Proteomes" id="UP000008198">
    <property type="component" value="Chromosome"/>
</dbReference>
<dbReference type="GO" id="GO:1990904">
    <property type="term" value="C:ribonucleoprotein complex"/>
    <property type="evidence" value="ECO:0007669"/>
    <property type="project" value="UniProtKB-KW"/>
</dbReference>
<dbReference type="GO" id="GO:0005840">
    <property type="term" value="C:ribosome"/>
    <property type="evidence" value="ECO:0007669"/>
    <property type="project" value="UniProtKB-KW"/>
</dbReference>
<dbReference type="GO" id="GO:0019843">
    <property type="term" value="F:rRNA binding"/>
    <property type="evidence" value="ECO:0007669"/>
    <property type="project" value="UniProtKB-UniRule"/>
</dbReference>
<dbReference type="GO" id="GO:0003735">
    <property type="term" value="F:structural constituent of ribosome"/>
    <property type="evidence" value="ECO:0007669"/>
    <property type="project" value="InterPro"/>
</dbReference>
<dbReference type="GO" id="GO:0006412">
    <property type="term" value="P:translation"/>
    <property type="evidence" value="ECO:0007669"/>
    <property type="project" value="UniProtKB-UniRule"/>
</dbReference>
<dbReference type="FunFam" id="3.30.420.80:FF:000001">
    <property type="entry name" value="30S ribosomal protein S11"/>
    <property type="match status" value="1"/>
</dbReference>
<dbReference type="Gene3D" id="3.30.420.80">
    <property type="entry name" value="Ribosomal protein S11"/>
    <property type="match status" value="1"/>
</dbReference>
<dbReference type="HAMAP" id="MF_01310">
    <property type="entry name" value="Ribosomal_uS11"/>
    <property type="match status" value="1"/>
</dbReference>
<dbReference type="InterPro" id="IPR001971">
    <property type="entry name" value="Ribosomal_uS11"/>
</dbReference>
<dbReference type="InterPro" id="IPR019981">
    <property type="entry name" value="Ribosomal_uS11_bac-type"/>
</dbReference>
<dbReference type="InterPro" id="IPR018102">
    <property type="entry name" value="Ribosomal_uS11_CS"/>
</dbReference>
<dbReference type="InterPro" id="IPR036967">
    <property type="entry name" value="Ribosomal_uS11_sf"/>
</dbReference>
<dbReference type="NCBIfam" id="NF003698">
    <property type="entry name" value="PRK05309.1"/>
    <property type="match status" value="1"/>
</dbReference>
<dbReference type="NCBIfam" id="TIGR03632">
    <property type="entry name" value="uS11_bact"/>
    <property type="match status" value="1"/>
</dbReference>
<dbReference type="PANTHER" id="PTHR11759">
    <property type="entry name" value="40S RIBOSOMAL PROTEIN S14/30S RIBOSOMAL PROTEIN S11"/>
    <property type="match status" value="1"/>
</dbReference>
<dbReference type="Pfam" id="PF00411">
    <property type="entry name" value="Ribosomal_S11"/>
    <property type="match status" value="1"/>
</dbReference>
<dbReference type="PIRSF" id="PIRSF002131">
    <property type="entry name" value="Ribosomal_S11"/>
    <property type="match status" value="1"/>
</dbReference>
<dbReference type="SUPFAM" id="SSF53137">
    <property type="entry name" value="Translational machinery components"/>
    <property type="match status" value="1"/>
</dbReference>
<dbReference type="PROSITE" id="PS00054">
    <property type="entry name" value="RIBOSOMAL_S11"/>
    <property type="match status" value="1"/>
</dbReference>
<proteinExistence type="inferred from homology"/>
<sequence>MAKRNVVAKKKVVKKNIARGVVYISATFNNTNITITDEMGNVICWSTAGGLGFKGSKKSTPYAAQQAVESALSKAKEHGVKEVGIKVQGPGSGRETAIKSVGATEGVKVLWIKDITPLPHNGCRPPKRRRV</sequence>
<protein>
    <recommendedName>
        <fullName evidence="1">Small ribosomal subunit protein uS11</fullName>
    </recommendedName>
    <alternativeName>
        <fullName evidence="2">30S ribosomal protein S11</fullName>
    </alternativeName>
</protein>
<keyword id="KW-0687">Ribonucleoprotein</keyword>
<keyword id="KW-0689">Ribosomal protein</keyword>
<keyword id="KW-0694">RNA-binding</keyword>
<keyword id="KW-0699">rRNA-binding</keyword>
<feature type="chain" id="PRO_1000141099" description="Small ribosomal subunit protein uS11">
    <location>
        <begin position="1"/>
        <end position="131"/>
    </location>
</feature>
<gene>
    <name evidence="1" type="primary">rpsK</name>
    <name type="ordered locus">HPP12_1261</name>
</gene>
<accession>B6JND5</accession>
<evidence type="ECO:0000255" key="1">
    <source>
        <dbReference type="HAMAP-Rule" id="MF_01310"/>
    </source>
</evidence>
<evidence type="ECO:0000305" key="2"/>
<name>RS11_HELP2</name>